<name>SPSA4_ARATH</name>
<dbReference type="EC" id="2.4.1.14" evidence="1"/>
<dbReference type="EMBL" id="AF096373">
    <property type="protein sequence ID" value="AAC62812.1"/>
    <property type="molecule type" value="Genomic_DNA"/>
</dbReference>
<dbReference type="EMBL" id="AL049487">
    <property type="protein sequence ID" value="CAB39764.1"/>
    <property type="status" value="ALT_SEQ"/>
    <property type="molecule type" value="Genomic_DNA"/>
</dbReference>
<dbReference type="EMBL" id="AL161516">
    <property type="protein sequence ID" value="CAB78135.1"/>
    <property type="status" value="ALT_SEQ"/>
    <property type="molecule type" value="Genomic_DNA"/>
</dbReference>
<dbReference type="EMBL" id="CP002687">
    <property type="protein sequence ID" value="AEE82844.1"/>
    <property type="molecule type" value="Genomic_DNA"/>
</dbReference>
<dbReference type="EMBL" id="CP002687">
    <property type="protein sequence ID" value="AEE82845.1"/>
    <property type="molecule type" value="Genomic_DNA"/>
</dbReference>
<dbReference type="EMBL" id="CP002687">
    <property type="protein sequence ID" value="ANM67156.1"/>
    <property type="molecule type" value="Genomic_DNA"/>
</dbReference>
<dbReference type="EMBL" id="AK175938">
    <property type="protein sequence ID" value="BAD43701.1"/>
    <property type="molecule type" value="mRNA"/>
</dbReference>
<dbReference type="EMBL" id="AK220698">
    <property type="protein sequence ID" value="BAD93789.1"/>
    <property type="molecule type" value="mRNA"/>
</dbReference>
<dbReference type="EMBL" id="AK220923">
    <property type="protein sequence ID" value="BAD94390.1"/>
    <property type="molecule type" value="mRNA"/>
</dbReference>
<dbReference type="EMBL" id="AK221092">
    <property type="protein sequence ID" value="BAD94960.1"/>
    <property type="molecule type" value="mRNA"/>
</dbReference>
<dbReference type="EMBL" id="AK230012">
    <property type="protein sequence ID" value="BAF01835.1"/>
    <property type="molecule type" value="mRNA"/>
</dbReference>
<dbReference type="PIR" id="T01981">
    <property type="entry name" value="T01981"/>
</dbReference>
<dbReference type="PIR" id="T04062">
    <property type="entry name" value="T04062"/>
</dbReference>
<dbReference type="RefSeq" id="NP_001031609.1">
    <property type="nucleotide sequence ID" value="NM_001036532.3"/>
</dbReference>
<dbReference type="RefSeq" id="NP_001329003.1">
    <property type="nucleotide sequence ID" value="NM_001340652.1"/>
</dbReference>
<dbReference type="RefSeq" id="NP_192750.2">
    <property type="nucleotide sequence ID" value="NM_117080.5"/>
</dbReference>
<dbReference type="SMR" id="F4JLK2"/>
<dbReference type="FunCoup" id="F4JLK2">
    <property type="interactions" value="239"/>
</dbReference>
<dbReference type="STRING" id="3702.F4JLK2"/>
<dbReference type="CAZy" id="GT4">
    <property type="family name" value="Glycosyltransferase Family 4"/>
</dbReference>
<dbReference type="iPTMnet" id="F4JLK2"/>
<dbReference type="PaxDb" id="3702-AT4G10120.2"/>
<dbReference type="ProteomicsDB" id="228368"/>
<dbReference type="EnsemblPlants" id="AT4G10120.1">
    <property type="protein sequence ID" value="AT4G10120.1"/>
    <property type="gene ID" value="AT4G10120"/>
</dbReference>
<dbReference type="EnsemblPlants" id="AT4G10120.2">
    <property type="protein sequence ID" value="AT4G10120.2"/>
    <property type="gene ID" value="AT4G10120"/>
</dbReference>
<dbReference type="EnsemblPlants" id="AT4G10120.3">
    <property type="protein sequence ID" value="AT4G10120.3"/>
    <property type="gene ID" value="AT4G10120"/>
</dbReference>
<dbReference type="GeneID" id="826603"/>
<dbReference type="Gramene" id="AT4G10120.1">
    <property type="protein sequence ID" value="AT4G10120.1"/>
    <property type="gene ID" value="AT4G10120"/>
</dbReference>
<dbReference type="Gramene" id="AT4G10120.2">
    <property type="protein sequence ID" value="AT4G10120.2"/>
    <property type="gene ID" value="AT4G10120"/>
</dbReference>
<dbReference type="Gramene" id="AT4G10120.3">
    <property type="protein sequence ID" value="AT4G10120.3"/>
    <property type="gene ID" value="AT4G10120"/>
</dbReference>
<dbReference type="KEGG" id="ath:AT4G10120"/>
<dbReference type="Araport" id="AT4G10120"/>
<dbReference type="TAIR" id="AT4G10120">
    <property type="gene designation" value="SPS4F"/>
</dbReference>
<dbReference type="eggNOG" id="KOG0853">
    <property type="taxonomic scope" value="Eukaryota"/>
</dbReference>
<dbReference type="HOGENOM" id="CLU_009583_24_0_1"/>
<dbReference type="InParanoid" id="F4JLK2"/>
<dbReference type="BRENDA" id="2.4.1.14">
    <property type="organism ID" value="399"/>
</dbReference>
<dbReference type="UniPathway" id="UPA00371">
    <property type="reaction ID" value="UER00545"/>
</dbReference>
<dbReference type="PRO" id="PR:F4JLK2"/>
<dbReference type="Proteomes" id="UP000006548">
    <property type="component" value="Chromosome 4"/>
</dbReference>
<dbReference type="ExpressionAtlas" id="F4JLK2">
    <property type="expression patterns" value="baseline and differential"/>
</dbReference>
<dbReference type="GO" id="GO:0005829">
    <property type="term" value="C:cytosol"/>
    <property type="evidence" value="ECO:0007005"/>
    <property type="project" value="TAIR"/>
</dbReference>
<dbReference type="GO" id="GO:0046524">
    <property type="term" value="F:sucrose-phosphate synthase activity"/>
    <property type="evidence" value="ECO:0000314"/>
    <property type="project" value="TAIR"/>
</dbReference>
<dbReference type="GO" id="GO:0005986">
    <property type="term" value="P:sucrose biosynthetic process"/>
    <property type="evidence" value="ECO:0000316"/>
    <property type="project" value="TAIR"/>
</dbReference>
<dbReference type="CDD" id="cd03800">
    <property type="entry name" value="GT4_sucrose_synthase"/>
    <property type="match status" value="1"/>
</dbReference>
<dbReference type="CDD" id="cd16419">
    <property type="entry name" value="HAD_SPS"/>
    <property type="match status" value="1"/>
</dbReference>
<dbReference type="Gene3D" id="3.40.50.2000">
    <property type="entry name" value="Glycogen Phosphorylase B"/>
    <property type="match status" value="2"/>
</dbReference>
<dbReference type="InterPro" id="IPR001296">
    <property type="entry name" value="Glyco_trans_1"/>
</dbReference>
<dbReference type="InterPro" id="IPR036412">
    <property type="entry name" value="HAD-like_sf"/>
</dbReference>
<dbReference type="InterPro" id="IPR006380">
    <property type="entry name" value="SPP-like_dom"/>
</dbReference>
<dbReference type="InterPro" id="IPR044161">
    <property type="entry name" value="SPS"/>
</dbReference>
<dbReference type="InterPro" id="IPR035659">
    <property type="entry name" value="SPS_C"/>
</dbReference>
<dbReference type="InterPro" id="IPR012819">
    <property type="entry name" value="SPS_pln"/>
</dbReference>
<dbReference type="InterPro" id="IPR000368">
    <property type="entry name" value="Sucrose_synth_GT-B1"/>
</dbReference>
<dbReference type="NCBIfam" id="TIGR02468">
    <property type="entry name" value="sucrsPsyn_pln"/>
    <property type="match status" value="1"/>
</dbReference>
<dbReference type="PANTHER" id="PTHR46039">
    <property type="entry name" value="SUCROSE-PHOSPHATE SYNTHASE 3-RELATED"/>
    <property type="match status" value="1"/>
</dbReference>
<dbReference type="PANTHER" id="PTHR46039:SF1">
    <property type="entry name" value="SUCROSE-PHOSPHATE SYNTHASE 4"/>
    <property type="match status" value="1"/>
</dbReference>
<dbReference type="Pfam" id="PF00534">
    <property type="entry name" value="Glycos_transf_1"/>
    <property type="match status" value="1"/>
</dbReference>
<dbReference type="Pfam" id="PF00862">
    <property type="entry name" value="GT-B_Sucrose_synth"/>
    <property type="match status" value="1"/>
</dbReference>
<dbReference type="Pfam" id="PF05116">
    <property type="entry name" value="S6PP"/>
    <property type="match status" value="1"/>
</dbReference>
<dbReference type="SUPFAM" id="SSF56784">
    <property type="entry name" value="HAD-like"/>
    <property type="match status" value="1"/>
</dbReference>
<dbReference type="SUPFAM" id="SSF53756">
    <property type="entry name" value="UDP-Glycosyltransferase/glycogen phosphorylase"/>
    <property type="match status" value="1"/>
</dbReference>
<keyword id="KW-0328">Glycosyltransferase</keyword>
<keyword id="KW-0597">Phosphoprotein</keyword>
<keyword id="KW-1185">Reference proteome</keyword>
<keyword id="KW-0808">Transferase</keyword>
<gene>
    <name evidence="6" type="primary">SPS4</name>
    <name evidence="7" type="synonym">SPSC</name>
    <name evidence="9" type="ordered locus">At4g10120</name>
    <name evidence="10" type="ORF">F28M11.40</name>
</gene>
<reference key="1">
    <citation type="journal article" date="1999" name="Nature">
        <title>Sequence and analysis of chromosome 4 of the plant Arabidopsis thaliana.</title>
        <authorList>
            <person name="Mayer K.F.X."/>
            <person name="Schueller C."/>
            <person name="Wambutt R."/>
            <person name="Murphy G."/>
            <person name="Volckaert G."/>
            <person name="Pohl T."/>
            <person name="Duesterhoeft A."/>
            <person name="Stiekema W."/>
            <person name="Entian K.-D."/>
            <person name="Terryn N."/>
            <person name="Harris B."/>
            <person name="Ansorge W."/>
            <person name="Brandt P."/>
            <person name="Grivell L.A."/>
            <person name="Rieger M."/>
            <person name="Weichselgartner M."/>
            <person name="de Simone V."/>
            <person name="Obermaier B."/>
            <person name="Mache R."/>
            <person name="Mueller M."/>
            <person name="Kreis M."/>
            <person name="Delseny M."/>
            <person name="Puigdomenech P."/>
            <person name="Watson M."/>
            <person name="Schmidtheini T."/>
            <person name="Reichert B."/>
            <person name="Portetelle D."/>
            <person name="Perez-Alonso M."/>
            <person name="Boutry M."/>
            <person name="Bancroft I."/>
            <person name="Vos P."/>
            <person name="Hoheisel J."/>
            <person name="Zimmermann W."/>
            <person name="Wedler H."/>
            <person name="Ridley P."/>
            <person name="Langham S.-A."/>
            <person name="McCullagh B."/>
            <person name="Bilham L."/>
            <person name="Robben J."/>
            <person name="van der Schueren J."/>
            <person name="Grymonprez B."/>
            <person name="Chuang Y.-J."/>
            <person name="Vandenbussche F."/>
            <person name="Braeken M."/>
            <person name="Weltjens I."/>
            <person name="Voet M."/>
            <person name="Bastiaens I."/>
            <person name="Aert R."/>
            <person name="Defoor E."/>
            <person name="Weitzenegger T."/>
            <person name="Bothe G."/>
            <person name="Ramsperger U."/>
            <person name="Hilbert H."/>
            <person name="Braun M."/>
            <person name="Holzer E."/>
            <person name="Brandt A."/>
            <person name="Peters S."/>
            <person name="van Staveren M."/>
            <person name="Dirkse W."/>
            <person name="Mooijman P."/>
            <person name="Klein Lankhorst R."/>
            <person name="Rose M."/>
            <person name="Hauf J."/>
            <person name="Koetter P."/>
            <person name="Berneiser S."/>
            <person name="Hempel S."/>
            <person name="Feldpausch M."/>
            <person name="Lamberth S."/>
            <person name="Van den Daele H."/>
            <person name="De Keyser A."/>
            <person name="Buysshaert C."/>
            <person name="Gielen J."/>
            <person name="Villarroel R."/>
            <person name="De Clercq R."/>
            <person name="van Montagu M."/>
            <person name="Rogers J."/>
            <person name="Cronin A."/>
            <person name="Quail M.A."/>
            <person name="Bray-Allen S."/>
            <person name="Clark L."/>
            <person name="Doggett J."/>
            <person name="Hall S."/>
            <person name="Kay M."/>
            <person name="Lennard N."/>
            <person name="McLay K."/>
            <person name="Mayes R."/>
            <person name="Pettett A."/>
            <person name="Rajandream M.A."/>
            <person name="Lyne M."/>
            <person name="Benes V."/>
            <person name="Rechmann S."/>
            <person name="Borkova D."/>
            <person name="Bloecker H."/>
            <person name="Scharfe M."/>
            <person name="Grimm M."/>
            <person name="Loehnert T.-H."/>
            <person name="Dose S."/>
            <person name="de Haan M."/>
            <person name="Maarse A.C."/>
            <person name="Schaefer M."/>
            <person name="Mueller-Auer S."/>
            <person name="Gabel C."/>
            <person name="Fuchs M."/>
            <person name="Fartmann B."/>
            <person name="Granderath K."/>
            <person name="Dauner D."/>
            <person name="Herzl A."/>
            <person name="Neumann S."/>
            <person name="Argiriou A."/>
            <person name="Vitale D."/>
            <person name="Liguori R."/>
            <person name="Piravandi E."/>
            <person name="Massenet O."/>
            <person name="Quigley F."/>
            <person name="Clabauld G."/>
            <person name="Muendlein A."/>
            <person name="Felber R."/>
            <person name="Schnabl S."/>
            <person name="Hiller R."/>
            <person name="Schmidt W."/>
            <person name="Lecharny A."/>
            <person name="Aubourg S."/>
            <person name="Chefdor F."/>
            <person name="Cooke R."/>
            <person name="Berger C."/>
            <person name="Monfort A."/>
            <person name="Casacuberta E."/>
            <person name="Gibbons T."/>
            <person name="Weber N."/>
            <person name="Vandenbol M."/>
            <person name="Bargues M."/>
            <person name="Terol J."/>
            <person name="Torres A."/>
            <person name="Perez-Perez A."/>
            <person name="Purnelle B."/>
            <person name="Bent E."/>
            <person name="Johnson S."/>
            <person name="Tacon D."/>
            <person name="Jesse T."/>
            <person name="Heijnen L."/>
            <person name="Schwarz S."/>
            <person name="Scholler P."/>
            <person name="Heber S."/>
            <person name="Francs P."/>
            <person name="Bielke C."/>
            <person name="Frishman D."/>
            <person name="Haase D."/>
            <person name="Lemcke K."/>
            <person name="Mewes H.-W."/>
            <person name="Stocker S."/>
            <person name="Zaccaria P."/>
            <person name="Bevan M."/>
            <person name="Wilson R.K."/>
            <person name="de la Bastide M."/>
            <person name="Habermann K."/>
            <person name="Parnell L."/>
            <person name="Dedhia N."/>
            <person name="Gnoj L."/>
            <person name="Schutz K."/>
            <person name="Huang E."/>
            <person name="Spiegel L."/>
            <person name="Sekhon M."/>
            <person name="Murray J."/>
            <person name="Sheet P."/>
            <person name="Cordes M."/>
            <person name="Abu-Threideh J."/>
            <person name="Stoneking T."/>
            <person name="Kalicki J."/>
            <person name="Graves T."/>
            <person name="Harmon G."/>
            <person name="Edwards J."/>
            <person name="Latreille P."/>
            <person name="Courtney L."/>
            <person name="Cloud J."/>
            <person name="Abbott A."/>
            <person name="Scott K."/>
            <person name="Johnson D."/>
            <person name="Minx P."/>
            <person name="Bentley D."/>
            <person name="Fulton B."/>
            <person name="Miller N."/>
            <person name="Greco T."/>
            <person name="Kemp K."/>
            <person name="Kramer J."/>
            <person name="Fulton L."/>
            <person name="Mardis E."/>
            <person name="Dante M."/>
            <person name="Pepin K."/>
            <person name="Hillier L.W."/>
            <person name="Nelson J."/>
            <person name="Spieth J."/>
            <person name="Ryan E."/>
            <person name="Andrews S."/>
            <person name="Geisel C."/>
            <person name="Layman D."/>
            <person name="Du H."/>
            <person name="Ali J."/>
            <person name="Berghoff A."/>
            <person name="Jones K."/>
            <person name="Drone K."/>
            <person name="Cotton M."/>
            <person name="Joshu C."/>
            <person name="Antonoiu B."/>
            <person name="Zidanic M."/>
            <person name="Strong C."/>
            <person name="Sun H."/>
            <person name="Lamar B."/>
            <person name="Yordan C."/>
            <person name="Ma P."/>
            <person name="Zhong J."/>
            <person name="Preston R."/>
            <person name="Vil D."/>
            <person name="Shekher M."/>
            <person name="Matero A."/>
            <person name="Shah R."/>
            <person name="Swaby I.K."/>
            <person name="O'Shaughnessy A."/>
            <person name="Rodriguez M."/>
            <person name="Hoffman J."/>
            <person name="Till S."/>
            <person name="Granat S."/>
            <person name="Shohdy N."/>
            <person name="Hasegawa A."/>
            <person name="Hameed A."/>
            <person name="Lodhi M."/>
            <person name="Johnson A."/>
            <person name="Chen E."/>
            <person name="Marra M.A."/>
            <person name="Martienssen R."/>
            <person name="McCombie W.R."/>
        </authorList>
    </citation>
    <scope>NUCLEOTIDE SEQUENCE [LARGE SCALE GENOMIC DNA]</scope>
    <source>
        <strain>cv. Columbia</strain>
    </source>
</reference>
<reference key="2">
    <citation type="journal article" date="2017" name="Plant J.">
        <title>Araport11: a complete reannotation of the Arabidopsis thaliana reference genome.</title>
        <authorList>
            <person name="Cheng C.Y."/>
            <person name="Krishnakumar V."/>
            <person name="Chan A.P."/>
            <person name="Thibaud-Nissen F."/>
            <person name="Schobel S."/>
            <person name="Town C.D."/>
        </authorList>
    </citation>
    <scope>GENOME REANNOTATION</scope>
    <source>
        <strain>cv. Columbia</strain>
    </source>
</reference>
<reference key="3">
    <citation type="submission" date="2006-07" db="EMBL/GenBank/DDBJ databases">
        <title>Large-scale analysis of RIKEN Arabidopsis full-length (RAFL) cDNAs.</title>
        <authorList>
            <person name="Totoki Y."/>
            <person name="Seki M."/>
            <person name="Ishida J."/>
            <person name="Nakajima M."/>
            <person name="Enju A."/>
            <person name="Kamiya A."/>
            <person name="Narusaka M."/>
            <person name="Shin-i T."/>
            <person name="Nakagawa M."/>
            <person name="Sakamoto N."/>
            <person name="Oishi K."/>
            <person name="Kohara Y."/>
            <person name="Kobayashi M."/>
            <person name="Toyoda A."/>
            <person name="Sakaki Y."/>
            <person name="Sakurai T."/>
            <person name="Iida K."/>
            <person name="Akiyama K."/>
            <person name="Satou M."/>
            <person name="Toyoda T."/>
            <person name="Konagaya A."/>
            <person name="Carninci P."/>
            <person name="Kawai J."/>
            <person name="Hayashizaki Y."/>
            <person name="Shinozaki K."/>
        </authorList>
    </citation>
    <scope>NUCLEOTIDE SEQUENCE [LARGE SCALE MRNA]</scope>
    <source>
        <strain>cv. Columbia</strain>
    </source>
</reference>
<reference key="4">
    <citation type="journal article" date="2007" name="J. Plant Physiol.">
        <title>Phylogenetic and expression analysis of sucrose phosphate synthase isozymes in plants.</title>
        <authorList>
            <person name="Lutfiyya L.L."/>
            <person name="Xu N."/>
            <person name="D'Ordine R.L."/>
            <person name="Morrell J.A."/>
            <person name="Miller P.W."/>
            <person name="Duff S.M."/>
        </authorList>
    </citation>
    <scope>GENE FAMILY</scope>
</reference>
<reference key="5">
    <citation type="journal article" date="2009" name="J. Proteomics">
        <title>Phosphoproteomic analysis of nuclei-enriched fractions from Arabidopsis thaliana.</title>
        <authorList>
            <person name="Jones A.M.E."/>
            <person name="MacLean D."/>
            <person name="Studholme D.J."/>
            <person name="Serna-Sanz A."/>
            <person name="Andreasson E."/>
            <person name="Rathjen J.P."/>
            <person name="Peck S.C."/>
        </authorList>
    </citation>
    <scope>PHOSPHORYLATION [LARGE SCALE ANALYSIS] AT SER-180</scope>
    <scope>IDENTIFICATION BY MASS SPECTROMETRY [LARGE SCALE ANALYSIS]</scope>
    <source>
        <strain>cv. Columbia</strain>
    </source>
</reference>
<reference key="6">
    <citation type="journal article" date="2009" name="Plant Physiol.">
        <title>Large-scale Arabidopsis phosphoproteome profiling reveals novel chloroplast kinase substrates and phosphorylation networks.</title>
        <authorList>
            <person name="Reiland S."/>
            <person name="Messerli G."/>
            <person name="Baerenfaller K."/>
            <person name="Gerrits B."/>
            <person name="Endler A."/>
            <person name="Grossmann J."/>
            <person name="Gruissem W."/>
            <person name="Baginsky S."/>
        </authorList>
    </citation>
    <scope>PHOSPHORYLATION [LARGE SCALE ANALYSIS] AT SER-148</scope>
    <scope>IDENTIFICATION BY MASS SPECTROMETRY [LARGE SCALE ANALYSIS]</scope>
</reference>
<reference key="7">
    <citation type="journal article" date="2011" name="Plant Cell Environ.">
        <title>Decrease in leaf sucrose synthesis leads to increased leaf starch turnover and decreased RuBP regeneration-limited photosynthesis but not Rubisco-limited photosynthesis in Arabidopsis null mutants of SPSA1.</title>
        <authorList>
            <person name="Sun J."/>
            <person name="Zhang J."/>
            <person name="Larue C.T."/>
            <person name="Huber S.C."/>
        </authorList>
    </citation>
    <scope>INDUCTION BY COLD</scope>
    <source>
        <strain>cv. Columbia</strain>
    </source>
</reference>
<accession>F4JLK2</accession>
<accession>O82624</accession>
<accession>Q56Z77</accession>
<accession>Q570L0</accession>
<accession>Q680C9</accession>
<accession>Q9SN30</accession>
<protein>
    <recommendedName>
        <fullName evidence="6">Sucrose-phosphate synthase 4</fullName>
        <ecNumber evidence="1">2.4.1.14</ecNumber>
    </recommendedName>
    <alternativeName>
        <fullName evidence="6">Sucrose phosphate synthase 4F</fullName>
        <shortName evidence="6">AtSPS4F</shortName>
    </alternativeName>
    <alternativeName>
        <fullName evidence="7">Sucrose phosphate synthase C</fullName>
    </alternativeName>
    <alternativeName>
        <fullName evidence="7">UDP-glucose-fructose-phosphate glucosyltransferase</fullName>
    </alternativeName>
</protein>
<organism>
    <name type="scientific">Arabidopsis thaliana</name>
    <name type="common">Mouse-ear cress</name>
    <dbReference type="NCBI Taxonomy" id="3702"/>
    <lineage>
        <taxon>Eukaryota</taxon>
        <taxon>Viridiplantae</taxon>
        <taxon>Streptophyta</taxon>
        <taxon>Embryophyta</taxon>
        <taxon>Tracheophyta</taxon>
        <taxon>Spermatophyta</taxon>
        <taxon>Magnoliopsida</taxon>
        <taxon>eudicotyledons</taxon>
        <taxon>Gunneridae</taxon>
        <taxon>Pentapetalae</taxon>
        <taxon>rosids</taxon>
        <taxon>malvids</taxon>
        <taxon>Brassicales</taxon>
        <taxon>Brassicaceae</taxon>
        <taxon>Camelineae</taxon>
        <taxon>Arabidopsis</taxon>
    </lineage>
</organism>
<comment type="function">
    <text evidence="3">Plays a role in photosynthetic sucrose synthesis by catalyzing the rate-limiting step of sucrose biosynthesis from UDP-glucose and fructose- 6-phosphate (By similarity). Involved in the regulation of carbon partitioning in the leaves of plants (By similarity). May regulate the synthesis of sucrose and therefore play a major role as a limiting factor in the export of photoassimilates out of the leaf (By similarity). Plays a role for sucrose availability that is essential for plant growth and fiber elongation (By similarity).</text>
</comment>
<comment type="catalytic activity">
    <reaction evidence="1">
        <text>beta-D-fructose 6-phosphate + UDP-alpha-D-glucose = sucrose 6(F)-phosphate + UDP + H(+)</text>
        <dbReference type="Rhea" id="RHEA:22172"/>
        <dbReference type="ChEBI" id="CHEBI:15378"/>
        <dbReference type="ChEBI" id="CHEBI:57634"/>
        <dbReference type="ChEBI" id="CHEBI:57723"/>
        <dbReference type="ChEBI" id="CHEBI:58223"/>
        <dbReference type="ChEBI" id="CHEBI:58885"/>
        <dbReference type="EC" id="2.4.1.14"/>
    </reaction>
</comment>
<comment type="activity regulation">
    <text evidence="2">Activity is regulated by phosphorylation and moderated by concentration of metabolites and light.</text>
</comment>
<comment type="pathway">
    <text evidence="1">Glycan biosynthesis; sucrose biosynthesis; sucrose from D-fructose 6-phosphate and UDP-alpha-D-glucose: step 1/2.</text>
</comment>
<comment type="subunit">
    <text evidence="1">Homodimer or homotetramer.</text>
</comment>
<comment type="induction">
    <text evidence="5">By cold (at protein level).</text>
</comment>
<comment type="similarity">
    <text evidence="8">Belongs to the glycosyltransferase 1 family.</text>
</comment>
<comment type="sequence caution" evidence="8">
    <conflict type="erroneous gene model prediction">
        <sequence resource="EMBL-CDS" id="CAB39764"/>
    </conflict>
</comment>
<comment type="sequence caution" evidence="8">
    <conflict type="erroneous gene model prediction">
        <sequence resource="EMBL-CDS" id="CAB78135"/>
    </conflict>
</comment>
<proteinExistence type="evidence at protein level"/>
<evidence type="ECO:0000250" key="1">
    <source>
        <dbReference type="UniProtKB" id="P31927"/>
    </source>
</evidence>
<evidence type="ECO:0000250" key="2">
    <source>
        <dbReference type="UniProtKB" id="P31928"/>
    </source>
</evidence>
<evidence type="ECO:0000250" key="3">
    <source>
        <dbReference type="UniProtKB" id="Q94BT0"/>
    </source>
</evidence>
<evidence type="ECO:0000256" key="4">
    <source>
        <dbReference type="SAM" id="MobiDB-lite"/>
    </source>
</evidence>
<evidence type="ECO:0000269" key="5">
    <source>
    </source>
</evidence>
<evidence type="ECO:0000303" key="6">
    <source>
    </source>
</evidence>
<evidence type="ECO:0000303" key="7">
    <source>
    </source>
</evidence>
<evidence type="ECO:0000305" key="8"/>
<evidence type="ECO:0000312" key="9">
    <source>
        <dbReference type="Araport" id="AT4G10120"/>
    </source>
</evidence>
<evidence type="ECO:0000312" key="10">
    <source>
        <dbReference type="EMBL" id="CAB39764.1"/>
    </source>
</evidence>
<evidence type="ECO:0007744" key="11">
    <source>
    </source>
</evidence>
<evidence type="ECO:0007744" key="12">
    <source>
    </source>
</evidence>
<sequence length="1050" mass="118878">MARNDWINSYLEAILDVGTSKKKRFESNSKIVQKLGDINSKDHQEKVFGDMNGKDHQEKVFSPIKYFVEEVVNSFDESDLYKTWIKVIATRNTRERSNRLENICWRIWHLARKKKQIVWDDGVRLSKRRIEREQGRNDAEEDLLSELSEGEKDKNDGEKEKSEVVTTLEPPRDHMPRIRSEMQIWSEDDKSSRNLYIVLISMHGLVRGENMELGRDSDTGGQVKYVVELARALANTEGVHRVDLLTRQISSPEVDYSYGEPVEMLSCPPEGSDSCGSYIIRIPCGSRDKYIPKESLWPHIPEFVDGALNHIVSIARSLGEQVNGGKPIWPYVIHGHYADAGEVAAHLAGALNVPMVLTGHSLGRNKFEQLLQQGRITREDIDRTYKIMRRIEAEEQSLDAAEMVVTSTRQEIDAQWGLYDGFDIKLERKLRVRRRRGVSCLGRYMPRMVVIPPGMDFSYVLTQDSQEPDGDLKSLIGPDRNQIKKPVPPIWSEIMRFFSNPHKPTILALSRPDHKKNVTTLVKAFGECQPLRELANLVLILGNRDDIEEMPNSSSVVLMNVLKLIDQYDLYGQVAYPKHHKQSEVPDIYRLAAKTKGVFINPALVEPFGLTLIEAAAYGLPIVATRNGGPVDIVKALNNGLLVDPHDQQAISDALLKLVANKHLWAECRKNGLKNIHRFSWPEHCRNYLSHVEHCRNRHPTSSLDIMKVPEELTSDSLRDVDDISLRFSTEGDFTLNGELDAGTRQKKLVDAISQMNSMKGCSAAIYSPGRRQMLFVVAVDSYDDNGNIKANLNEIIKNMIKAADLTSGKGKIGFVLASGSSLQEVVDITQKNLINLEDFDAIVCNSGSEIYYPWRDMMVDADYETHVEYKWPGESIRSVILRLICTEPAAEDDITEYASSCSTRCYAISVKQGVKTRRVDDLRQRLRMRGLRCNIVYTHAATRLNVIPLCASRIQALRYLSIRWGIDMSKTVFFLGEKGDTDYEDLLGGLHKTIILKGVVGSDSEKLLRSEENFKREDAVPQESPNISYVKENGGSQEIMSTLEAYGIK</sequence>
<feature type="chain" id="PRO_0000413640" description="Sucrose-phosphate synthase 4">
    <location>
        <begin position="1"/>
        <end position="1050"/>
    </location>
</feature>
<feature type="region of interest" description="Disordered" evidence="4">
    <location>
        <begin position="134"/>
        <end position="167"/>
    </location>
</feature>
<feature type="compositionally biased region" description="Basic and acidic residues" evidence="4">
    <location>
        <begin position="149"/>
        <end position="163"/>
    </location>
</feature>
<feature type="modified residue" description="Phosphoserine" evidence="12">
    <location>
        <position position="148"/>
    </location>
</feature>
<feature type="modified residue" description="Phosphoserine" evidence="11">
    <location>
        <position position="180"/>
    </location>
</feature>
<feature type="sequence conflict" description="In Ref. 3; BAD43701/BAD94390/BAD94960/BAF01835." evidence="8" ref="3">
    <original>G</original>
    <variation>D</variation>
    <location>
        <position position="276"/>
    </location>
</feature>
<feature type="sequence conflict" description="In Ref. 3; BAD94390/BAD94960/BAF01835." evidence="8" ref="3">
    <original>L</original>
    <variation>M</variation>
    <location>
        <position position="461"/>
    </location>
</feature>
<feature type="sequence conflict" description="In Ref. 3; BAD94390/BAD94960/BAF01835." evidence="8" ref="3">
    <original>A</original>
    <variation>V</variation>
    <location>
        <position position="603"/>
    </location>
</feature>
<feature type="sequence conflict" description="In Ref. 3; BAD94390/BAD94960/BAF01835." evidence="8" ref="3">
    <original>E</original>
    <variation>G</variation>
    <location>
        <position position="869"/>
    </location>
</feature>